<protein>
    <recommendedName>
        <fullName>Sodium/potassium/calcium exchanger 2</fullName>
    </recommendedName>
    <alternativeName>
        <fullName evidence="8">Na(+)/K(+)/Ca(2+)-exchange protein 2</fullName>
    </alternativeName>
    <alternativeName>
        <fullName>Retinal cone Na-Ca+K exchanger</fullName>
    </alternativeName>
    <alternativeName>
        <fullName>Solute carrier family 24 member 2</fullName>
    </alternativeName>
</protein>
<gene>
    <name type="primary">SLC24A2</name>
    <name evidence="8" type="synonym">NCKX2</name>
</gene>
<accession>Q9UI40</accession>
<accession>B7ZLL8</accession>
<accession>Q9NTN5</accession>
<accession>Q9NZQ4</accession>
<name>NCKX2_HUMAN</name>
<sequence length="661" mass="73664">MDLQQSTTITSLEKWCLDESLSGCRRHYSVKKKLKLIRVLGLFMGLVAISTVSFSISAFSETDTQSTGEASVVSGPRVAQGYHQRTLLDLNDKILDYTPQPPLSKEGESENSTDHAQGDYPKDIFSLEERRKGAIILHVIGMIYMFIALAIVCDEFFVPSLTVITEKLGISDDVAGATFMAAGGSAPELFTSLIGVFIAHSNVGIGTIVGSAVFNILFVIGMCALFSREILNLTWWPLFRDVSFYIVDLIMLIIFFLDNVIMWWESLLLLTAYFCYVVFMKFNVQVEKWVKQMINRNKVVKVTAPEAQAKPSAARDKDEPTLPAKPRLQRGGSSASLHNSLMRNSIFQLMIHTLDPLAEELGSYGKLKYYDTMTEEGRFREKASILHKIAKKKCHVDENERQNGAANHVEKIELPNSTSTDVEMTPSSDASEPVQNGNLSHNIEGAEAQTADEEEDQPLSLAWPSETRKQVTFLIVFPIVFPLWITLPDVRKPSSRKFFPITFFGSITWIAVFSYLMVWWAHQVGETIGISEEIMGLTILAAGTSIPDLITSVIVARKGLGDMAVSSSVGSNIFDITVGLPLPWLLYTVIHRFQPVAVSSNGLFCAIVLLFIMLLFVILSIALCKWRMNKILGFIMFGLYFVFLVVSVLLEDRILTCPVSI</sequence>
<evidence type="ECO:0000250" key="1">
    <source>
        <dbReference type="UniProtKB" id="O54701"/>
    </source>
</evidence>
<evidence type="ECO:0000250" key="2">
    <source>
        <dbReference type="UniProtKB" id="Q8BUN9"/>
    </source>
</evidence>
<evidence type="ECO:0000255" key="3"/>
<evidence type="ECO:0000256" key="4">
    <source>
        <dbReference type="SAM" id="MobiDB-lite"/>
    </source>
</evidence>
<evidence type="ECO:0000269" key="5">
    <source>
    </source>
</evidence>
<evidence type="ECO:0000269" key="6">
    <source>
    </source>
</evidence>
<evidence type="ECO:0000269" key="7">
    <source>
    </source>
</evidence>
<evidence type="ECO:0000303" key="8">
    <source>
    </source>
</evidence>
<evidence type="ECO:0000303" key="9">
    <source>
    </source>
</evidence>
<evidence type="ECO:0000305" key="10"/>
<evidence type="ECO:0000305" key="11">
    <source>
    </source>
</evidence>
<evidence type="ECO:0000305" key="12">
    <source>
    </source>
</evidence>
<dbReference type="EMBL" id="AF097366">
    <property type="protein sequence ID" value="AAF21810.1"/>
    <property type="molecule type" value="mRNA"/>
</dbReference>
<dbReference type="EMBL" id="AF177987">
    <property type="protein sequence ID" value="AAF25811.1"/>
    <property type="molecule type" value="mRNA"/>
</dbReference>
<dbReference type="EMBL" id="AL158077">
    <property type="status" value="NOT_ANNOTATED_CDS"/>
    <property type="molecule type" value="Genomic_DNA"/>
</dbReference>
<dbReference type="EMBL" id="AL158206">
    <property type="status" value="NOT_ANNOTATED_CDS"/>
    <property type="molecule type" value="Genomic_DNA"/>
</dbReference>
<dbReference type="EMBL" id="AL133281">
    <property type="status" value="NOT_ANNOTATED_CDS"/>
    <property type="molecule type" value="Genomic_DNA"/>
</dbReference>
<dbReference type="EMBL" id="BC069622">
    <property type="protein sequence ID" value="AAH69622.1"/>
    <property type="molecule type" value="mRNA"/>
</dbReference>
<dbReference type="EMBL" id="BC143889">
    <property type="protein sequence ID" value="AAI43890.1"/>
    <property type="molecule type" value="mRNA"/>
</dbReference>
<dbReference type="CCDS" id="CCDS55297.1">
    <molecule id="Q9UI40-2"/>
</dbReference>
<dbReference type="CCDS" id="CCDS6493.1">
    <molecule id="Q9UI40-1"/>
</dbReference>
<dbReference type="RefSeq" id="NP_001180217.1">
    <molecule id="Q9UI40-2"/>
    <property type="nucleotide sequence ID" value="NM_001193288.3"/>
</dbReference>
<dbReference type="RefSeq" id="NP_001362779.1">
    <molecule id="Q9UI40-1"/>
    <property type="nucleotide sequence ID" value="NM_001375850.1"/>
</dbReference>
<dbReference type="RefSeq" id="NP_001362780.1">
    <molecule id="Q9UI40-2"/>
    <property type="nucleotide sequence ID" value="NM_001375851.1"/>
</dbReference>
<dbReference type="RefSeq" id="NP_065077.1">
    <molecule id="Q9UI40-1"/>
    <property type="nucleotide sequence ID" value="NM_020344.4"/>
</dbReference>
<dbReference type="RefSeq" id="XP_005251482.1">
    <property type="nucleotide sequence ID" value="XM_005251425.2"/>
</dbReference>
<dbReference type="RefSeq" id="XP_005251483.1">
    <property type="nucleotide sequence ID" value="XM_005251426.4"/>
</dbReference>
<dbReference type="RefSeq" id="XP_006716813.1">
    <property type="nucleotide sequence ID" value="XM_006716750.3"/>
</dbReference>
<dbReference type="RefSeq" id="XP_016870081.1">
    <molecule id="Q9UI40-1"/>
    <property type="nucleotide sequence ID" value="XM_017014592.2"/>
</dbReference>
<dbReference type="RefSeq" id="XP_016870082.1">
    <property type="nucleotide sequence ID" value="XM_017014593.1"/>
</dbReference>
<dbReference type="RefSeq" id="XP_054218612.1">
    <molecule id="Q9UI40-1"/>
    <property type="nucleotide sequence ID" value="XM_054362637.1"/>
</dbReference>
<dbReference type="SMR" id="Q9UI40"/>
<dbReference type="BioGRID" id="117306">
    <property type="interactions" value="1"/>
</dbReference>
<dbReference type="FunCoup" id="Q9UI40">
    <property type="interactions" value="180"/>
</dbReference>
<dbReference type="STRING" id="9606.ENSP00000344801"/>
<dbReference type="ChEMBL" id="CHEMBL5209635"/>
<dbReference type="TCDB" id="2.A.19.4.11">
    <property type="family name" value="the ca(2+):cation antiporter (caca) family"/>
</dbReference>
<dbReference type="GlyCosmos" id="Q9UI40">
    <property type="glycosylation" value="1 site, No reported glycans"/>
</dbReference>
<dbReference type="GlyGen" id="Q9UI40">
    <property type="glycosylation" value="1 site"/>
</dbReference>
<dbReference type="iPTMnet" id="Q9UI40"/>
<dbReference type="PhosphoSitePlus" id="Q9UI40"/>
<dbReference type="SwissPalm" id="Q9UI40"/>
<dbReference type="BioMuta" id="SLC24A2"/>
<dbReference type="DMDM" id="17865516"/>
<dbReference type="MassIVE" id="Q9UI40"/>
<dbReference type="PaxDb" id="9606-ENSP00000344801"/>
<dbReference type="PeptideAtlas" id="Q9UI40"/>
<dbReference type="ProteomicsDB" id="84469">
    <molecule id="Q9UI40-1"/>
</dbReference>
<dbReference type="ProteomicsDB" id="84470">
    <molecule id="Q9UI40-2"/>
</dbReference>
<dbReference type="Antibodypedia" id="64282">
    <property type="antibodies" value="49 antibodies from 18 providers"/>
</dbReference>
<dbReference type="DNASU" id="25769"/>
<dbReference type="Ensembl" id="ENST00000286344.4">
    <molecule id="Q9UI40-2"/>
    <property type="protein sequence ID" value="ENSP00000286344.3"/>
    <property type="gene ID" value="ENSG00000155886.12"/>
</dbReference>
<dbReference type="Ensembl" id="ENST00000341998.7">
    <molecule id="Q9UI40-1"/>
    <property type="protein sequence ID" value="ENSP00000344801.1"/>
    <property type="gene ID" value="ENSG00000155886.12"/>
</dbReference>
<dbReference type="GeneID" id="25769"/>
<dbReference type="KEGG" id="hsa:25769"/>
<dbReference type="MANE-Select" id="ENST00000341998.7">
    <property type="protein sequence ID" value="ENSP00000344801.1"/>
    <property type="RefSeq nucleotide sequence ID" value="NM_020344.4"/>
    <property type="RefSeq protein sequence ID" value="NP_065077.1"/>
</dbReference>
<dbReference type="UCSC" id="uc003zoa.3">
    <molecule id="Q9UI40-1"/>
    <property type="organism name" value="human"/>
</dbReference>
<dbReference type="AGR" id="HGNC:10976"/>
<dbReference type="CTD" id="25769"/>
<dbReference type="DisGeNET" id="25769"/>
<dbReference type="GeneCards" id="SLC24A2"/>
<dbReference type="HGNC" id="HGNC:10976">
    <property type="gene designation" value="SLC24A2"/>
</dbReference>
<dbReference type="HPA" id="ENSG00000155886">
    <property type="expression patterns" value="Tissue enhanced (brain, retina)"/>
</dbReference>
<dbReference type="MIM" id="609838">
    <property type="type" value="gene"/>
</dbReference>
<dbReference type="neXtProt" id="NX_Q9UI40"/>
<dbReference type="OpenTargets" id="ENSG00000155886"/>
<dbReference type="PharmGKB" id="PA35852"/>
<dbReference type="VEuPathDB" id="HostDB:ENSG00000155886"/>
<dbReference type="eggNOG" id="KOG1307">
    <property type="taxonomic scope" value="Eukaryota"/>
</dbReference>
<dbReference type="GeneTree" id="ENSGT01030000234532"/>
<dbReference type="HOGENOM" id="CLU_007948_5_1_1"/>
<dbReference type="InParanoid" id="Q9UI40"/>
<dbReference type="OMA" id="XSSRKFF"/>
<dbReference type="OrthoDB" id="2127281at2759"/>
<dbReference type="PAN-GO" id="Q9UI40">
    <property type="GO annotations" value="7 GO annotations based on evolutionary models"/>
</dbReference>
<dbReference type="PhylomeDB" id="Q9UI40"/>
<dbReference type="TreeFam" id="TF318759"/>
<dbReference type="PathwayCommons" id="Q9UI40"/>
<dbReference type="Reactome" id="R-HSA-425561">
    <property type="pathway name" value="Sodium/Calcium exchangers"/>
</dbReference>
<dbReference type="SIGNOR" id="Q9UI40"/>
<dbReference type="BioGRID-ORCS" id="25769">
    <property type="hits" value="10 hits in 1145 CRISPR screens"/>
</dbReference>
<dbReference type="ChiTaRS" id="SLC24A2">
    <property type="organism name" value="human"/>
</dbReference>
<dbReference type="GenomeRNAi" id="25769"/>
<dbReference type="Pharos" id="Q9UI40">
    <property type="development level" value="Tbio"/>
</dbReference>
<dbReference type="PRO" id="PR:Q9UI40"/>
<dbReference type="Proteomes" id="UP000005640">
    <property type="component" value="Chromosome 9"/>
</dbReference>
<dbReference type="RNAct" id="Q9UI40">
    <property type="molecule type" value="protein"/>
</dbReference>
<dbReference type="Bgee" id="ENSG00000155886">
    <property type="expression patterns" value="Expressed in endothelial cell and 80 other cell types or tissues"/>
</dbReference>
<dbReference type="GO" id="GO:0001917">
    <property type="term" value="C:photoreceptor inner segment"/>
    <property type="evidence" value="ECO:0000250"/>
    <property type="project" value="ARUK-UCL"/>
</dbReference>
<dbReference type="GO" id="GO:0005886">
    <property type="term" value="C:plasma membrane"/>
    <property type="evidence" value="ECO:0000314"/>
    <property type="project" value="ARUK-UCL"/>
</dbReference>
<dbReference type="GO" id="GO:0098794">
    <property type="term" value="C:postsynapse"/>
    <property type="evidence" value="ECO:0007669"/>
    <property type="project" value="Ensembl"/>
</dbReference>
<dbReference type="GO" id="GO:0098793">
    <property type="term" value="C:presynapse"/>
    <property type="evidence" value="ECO:0007669"/>
    <property type="project" value="Ensembl"/>
</dbReference>
<dbReference type="GO" id="GO:0005262">
    <property type="term" value="F:calcium channel activity"/>
    <property type="evidence" value="ECO:0000318"/>
    <property type="project" value="GO_Central"/>
</dbReference>
<dbReference type="GO" id="GO:0008273">
    <property type="term" value="F:calcium, potassium:sodium antiporter activity"/>
    <property type="evidence" value="ECO:0000314"/>
    <property type="project" value="ARUK-UCL"/>
</dbReference>
<dbReference type="GO" id="GO:0015293">
    <property type="term" value="F:symporter activity"/>
    <property type="evidence" value="ECO:0007669"/>
    <property type="project" value="UniProtKB-KW"/>
</dbReference>
<dbReference type="GO" id="GO:0070509">
    <property type="term" value="P:calcium ion import"/>
    <property type="evidence" value="ECO:0000314"/>
    <property type="project" value="ARUK-UCL"/>
</dbReference>
<dbReference type="GO" id="GO:0098703">
    <property type="term" value="P:calcium ion import across plasma membrane"/>
    <property type="evidence" value="ECO:0000314"/>
    <property type="project" value="ARUK-UCL"/>
</dbReference>
<dbReference type="GO" id="GO:0070588">
    <property type="term" value="P:calcium ion transmembrane transport"/>
    <property type="evidence" value="ECO:0000314"/>
    <property type="project" value="ARUK-UCL"/>
</dbReference>
<dbReference type="GO" id="GO:0071486">
    <property type="term" value="P:cellular response to high light intensity"/>
    <property type="evidence" value="ECO:0000250"/>
    <property type="project" value="ARUK-UCL"/>
</dbReference>
<dbReference type="GO" id="GO:0036368">
    <property type="term" value="P:cone photoresponse recovery"/>
    <property type="evidence" value="ECO:0000250"/>
    <property type="project" value="ARUK-UCL"/>
</dbReference>
<dbReference type="GO" id="GO:0051649">
    <property type="term" value="P:establishment of localization in cell"/>
    <property type="evidence" value="ECO:0007669"/>
    <property type="project" value="Ensembl"/>
</dbReference>
<dbReference type="GO" id="GO:0006874">
    <property type="term" value="P:intracellular calcium ion homeostasis"/>
    <property type="evidence" value="ECO:0000314"/>
    <property type="project" value="ARUK-UCL"/>
</dbReference>
<dbReference type="GO" id="GO:0007612">
    <property type="term" value="P:learning"/>
    <property type="evidence" value="ECO:0007669"/>
    <property type="project" value="Ensembl"/>
</dbReference>
<dbReference type="GO" id="GO:0060292">
    <property type="term" value="P:long-term synaptic depression"/>
    <property type="evidence" value="ECO:0000318"/>
    <property type="project" value="GO_Central"/>
</dbReference>
<dbReference type="GO" id="GO:0060291">
    <property type="term" value="P:long-term synaptic potentiation"/>
    <property type="evidence" value="ECO:0000318"/>
    <property type="project" value="GO_Central"/>
</dbReference>
<dbReference type="GO" id="GO:0007613">
    <property type="term" value="P:memory"/>
    <property type="evidence" value="ECO:0007669"/>
    <property type="project" value="Ensembl"/>
</dbReference>
<dbReference type="GO" id="GO:0034220">
    <property type="term" value="P:monoatomic ion transmembrane transport"/>
    <property type="evidence" value="ECO:0000314"/>
    <property type="project" value="MGI"/>
</dbReference>
<dbReference type="GO" id="GO:0006811">
    <property type="term" value="P:monoatomic ion transport"/>
    <property type="evidence" value="ECO:0000304"/>
    <property type="project" value="Reactome"/>
</dbReference>
<dbReference type="GO" id="GO:0070050">
    <property type="term" value="P:neuron cellular homeostasis"/>
    <property type="evidence" value="ECO:0007669"/>
    <property type="project" value="Ensembl"/>
</dbReference>
<dbReference type="GO" id="GO:0007602">
    <property type="term" value="P:phototransduction"/>
    <property type="evidence" value="ECO:0000250"/>
    <property type="project" value="ARUK-UCL"/>
</dbReference>
<dbReference type="GO" id="GO:0071805">
    <property type="term" value="P:potassium ion transmembrane transport"/>
    <property type="evidence" value="ECO:0000314"/>
    <property type="project" value="ARUK-UCL"/>
</dbReference>
<dbReference type="GO" id="GO:0035725">
    <property type="term" value="P:sodium ion transmembrane transport"/>
    <property type="evidence" value="ECO:0000314"/>
    <property type="project" value="ARUK-UCL"/>
</dbReference>
<dbReference type="FunFam" id="1.20.1420.30:FF:000002">
    <property type="entry name" value="Sodium/potassium/calcium exchanger 2 isoform 1"/>
    <property type="match status" value="1"/>
</dbReference>
<dbReference type="FunFam" id="1.20.1420.30:FF:000004">
    <property type="entry name" value="Sodium/potassium/calcium exchanger 2 isoform 1"/>
    <property type="match status" value="1"/>
</dbReference>
<dbReference type="Gene3D" id="1.20.1420.30">
    <property type="entry name" value="NCX, central ion-binding region"/>
    <property type="match status" value="2"/>
</dbReference>
<dbReference type="InterPro" id="IPR004481">
    <property type="entry name" value="K/Na/Ca-exchanger"/>
</dbReference>
<dbReference type="InterPro" id="IPR004837">
    <property type="entry name" value="NaCa_Exmemb"/>
</dbReference>
<dbReference type="InterPro" id="IPR044880">
    <property type="entry name" value="NCX_ion-bd_dom_sf"/>
</dbReference>
<dbReference type="NCBIfam" id="TIGR00367">
    <property type="entry name" value="calcium/sodium antiporter"/>
    <property type="match status" value="1"/>
</dbReference>
<dbReference type="PANTHER" id="PTHR10846">
    <property type="entry name" value="SODIUM/POTASSIUM/CALCIUM EXCHANGER"/>
    <property type="match status" value="1"/>
</dbReference>
<dbReference type="PANTHER" id="PTHR10846:SF41">
    <property type="entry name" value="SODIUM_POTASSIUM_CALCIUM EXCHANGER 2"/>
    <property type="match status" value="1"/>
</dbReference>
<dbReference type="Pfam" id="PF01699">
    <property type="entry name" value="Na_Ca_ex"/>
    <property type="match status" value="2"/>
</dbReference>
<organism>
    <name type="scientific">Homo sapiens</name>
    <name type="common">Human</name>
    <dbReference type="NCBI Taxonomy" id="9606"/>
    <lineage>
        <taxon>Eukaryota</taxon>
        <taxon>Metazoa</taxon>
        <taxon>Chordata</taxon>
        <taxon>Craniata</taxon>
        <taxon>Vertebrata</taxon>
        <taxon>Euteleostomi</taxon>
        <taxon>Mammalia</taxon>
        <taxon>Eutheria</taxon>
        <taxon>Euarchontoglires</taxon>
        <taxon>Primates</taxon>
        <taxon>Haplorrhini</taxon>
        <taxon>Catarrhini</taxon>
        <taxon>Hominidae</taxon>
        <taxon>Homo</taxon>
    </lineage>
</organism>
<comment type="function">
    <text evidence="2 5 7">Calcium, potassium:sodium antiporter that transports 1 Ca(2+) and 1 K(+) in exchange for 4 Na(+) (PubMed:10662833, PubMed:26631410). Required for learming and memory by regulating neuronal Ca(2+), which is essential for the development of synaptic plasticity (By similarity).</text>
</comment>
<comment type="catalytic activity">
    <reaction evidence="11 12">
        <text>Ca(2+)(out) + K(+)(out) + 4 Na(+)(in) = Ca(2+)(in) + K(+)(in) + 4 Na(+)(out)</text>
        <dbReference type="Rhea" id="RHEA:69967"/>
        <dbReference type="ChEBI" id="CHEBI:29101"/>
        <dbReference type="ChEBI" id="CHEBI:29103"/>
        <dbReference type="ChEBI" id="CHEBI:29108"/>
    </reaction>
</comment>
<comment type="subcellular location">
    <subcellularLocation>
        <location evidence="7">Cell membrane</location>
        <topology evidence="3">Multi-pass membrane protein</topology>
    </subcellularLocation>
</comment>
<comment type="alternative products">
    <event type="alternative splicing"/>
    <isoform>
        <id>Q9UI40-1</id>
        <name>1</name>
        <sequence type="displayed"/>
    </isoform>
    <isoform>
        <id>Q9UI40-2</id>
        <name>2</name>
        <sequence type="described" ref="VSP_006164"/>
    </isoform>
</comment>
<comment type="similarity">
    <text evidence="10">Belongs to the Ca(2+):cation antiporter (CaCA) (TC 2.A.19) family. SLC24A subfamily.</text>
</comment>
<keyword id="KW-0025">Alternative splicing</keyword>
<keyword id="KW-0050">Antiport</keyword>
<keyword id="KW-0106">Calcium</keyword>
<keyword id="KW-0109">Calcium transport</keyword>
<keyword id="KW-1003">Cell membrane</keyword>
<keyword id="KW-0325">Glycoprotein</keyword>
<keyword id="KW-0406">Ion transport</keyword>
<keyword id="KW-0472">Membrane</keyword>
<keyword id="KW-0597">Phosphoprotein</keyword>
<keyword id="KW-0630">Potassium</keyword>
<keyword id="KW-0633">Potassium transport</keyword>
<keyword id="KW-1267">Proteomics identification</keyword>
<keyword id="KW-1185">Reference proteome</keyword>
<keyword id="KW-0677">Repeat</keyword>
<keyword id="KW-0915">Sodium</keyword>
<keyword id="KW-0739">Sodium transport</keyword>
<keyword id="KW-0769">Symport</keyword>
<keyword id="KW-0812">Transmembrane</keyword>
<keyword id="KW-1133">Transmembrane helix</keyword>
<keyword id="KW-0813">Transport</keyword>
<proteinExistence type="evidence at protein level"/>
<reference key="1">
    <citation type="journal article" date="2000" name="J. Neurosci.">
        <title>Molecular cloning and functional expression of the potassium-dependent sodium-calcium exchanger from human and chicken retinal cone photoreceptors.</title>
        <authorList>
            <person name="Prinsen C.F.M."/>
            <person name="Szerencsei R.T."/>
            <person name="Schnetkamp P.P.M."/>
        </authorList>
    </citation>
    <scope>NUCLEOTIDE SEQUENCE [MRNA] (ISOFORMS 1 AND 2)</scope>
    <scope>FUNCTION</scope>
    <scope>TRANSPORTER ACTIVITY</scope>
    <source>
        <tissue>Retina</tissue>
    </source>
</reference>
<reference key="2">
    <citation type="journal article" date="2004" name="Nature">
        <title>DNA sequence and analysis of human chromosome 9.</title>
        <authorList>
            <person name="Humphray S.J."/>
            <person name="Oliver K."/>
            <person name="Hunt A.R."/>
            <person name="Plumb R.W."/>
            <person name="Loveland J.E."/>
            <person name="Howe K.L."/>
            <person name="Andrews T.D."/>
            <person name="Searle S."/>
            <person name="Hunt S.E."/>
            <person name="Scott C.E."/>
            <person name="Jones M.C."/>
            <person name="Ainscough R."/>
            <person name="Almeida J.P."/>
            <person name="Ambrose K.D."/>
            <person name="Ashwell R.I.S."/>
            <person name="Babbage A.K."/>
            <person name="Babbage S."/>
            <person name="Bagguley C.L."/>
            <person name="Bailey J."/>
            <person name="Banerjee R."/>
            <person name="Barker D.J."/>
            <person name="Barlow K.F."/>
            <person name="Bates K."/>
            <person name="Beasley H."/>
            <person name="Beasley O."/>
            <person name="Bird C.P."/>
            <person name="Bray-Allen S."/>
            <person name="Brown A.J."/>
            <person name="Brown J.Y."/>
            <person name="Burford D."/>
            <person name="Burrill W."/>
            <person name="Burton J."/>
            <person name="Carder C."/>
            <person name="Carter N.P."/>
            <person name="Chapman J.C."/>
            <person name="Chen Y."/>
            <person name="Clarke G."/>
            <person name="Clark S.Y."/>
            <person name="Clee C.M."/>
            <person name="Clegg S."/>
            <person name="Collier R.E."/>
            <person name="Corby N."/>
            <person name="Crosier M."/>
            <person name="Cummings A.T."/>
            <person name="Davies J."/>
            <person name="Dhami P."/>
            <person name="Dunn M."/>
            <person name="Dutta I."/>
            <person name="Dyer L.W."/>
            <person name="Earthrowl M.E."/>
            <person name="Faulkner L."/>
            <person name="Fleming C.J."/>
            <person name="Frankish A."/>
            <person name="Frankland J.A."/>
            <person name="French L."/>
            <person name="Fricker D.G."/>
            <person name="Garner P."/>
            <person name="Garnett J."/>
            <person name="Ghori J."/>
            <person name="Gilbert J.G.R."/>
            <person name="Glison C."/>
            <person name="Grafham D.V."/>
            <person name="Gribble S."/>
            <person name="Griffiths C."/>
            <person name="Griffiths-Jones S."/>
            <person name="Grocock R."/>
            <person name="Guy J."/>
            <person name="Hall R.E."/>
            <person name="Hammond S."/>
            <person name="Harley J.L."/>
            <person name="Harrison E.S.I."/>
            <person name="Hart E.A."/>
            <person name="Heath P.D."/>
            <person name="Henderson C.D."/>
            <person name="Hopkins B.L."/>
            <person name="Howard P.J."/>
            <person name="Howden P.J."/>
            <person name="Huckle E."/>
            <person name="Johnson C."/>
            <person name="Johnson D."/>
            <person name="Joy A.A."/>
            <person name="Kay M."/>
            <person name="Keenan S."/>
            <person name="Kershaw J.K."/>
            <person name="Kimberley A.M."/>
            <person name="King A."/>
            <person name="Knights A."/>
            <person name="Laird G.K."/>
            <person name="Langford C."/>
            <person name="Lawlor S."/>
            <person name="Leongamornlert D.A."/>
            <person name="Leversha M."/>
            <person name="Lloyd C."/>
            <person name="Lloyd D.M."/>
            <person name="Lovell J."/>
            <person name="Martin S."/>
            <person name="Mashreghi-Mohammadi M."/>
            <person name="Matthews L."/>
            <person name="McLaren S."/>
            <person name="McLay K.E."/>
            <person name="McMurray A."/>
            <person name="Milne S."/>
            <person name="Nickerson T."/>
            <person name="Nisbett J."/>
            <person name="Nordsiek G."/>
            <person name="Pearce A.V."/>
            <person name="Peck A.I."/>
            <person name="Porter K.M."/>
            <person name="Pandian R."/>
            <person name="Pelan S."/>
            <person name="Phillimore B."/>
            <person name="Povey S."/>
            <person name="Ramsey Y."/>
            <person name="Rand V."/>
            <person name="Scharfe M."/>
            <person name="Sehra H.K."/>
            <person name="Shownkeen R."/>
            <person name="Sims S.K."/>
            <person name="Skuce C.D."/>
            <person name="Smith M."/>
            <person name="Steward C.A."/>
            <person name="Swarbreck D."/>
            <person name="Sycamore N."/>
            <person name="Tester J."/>
            <person name="Thorpe A."/>
            <person name="Tracey A."/>
            <person name="Tromans A."/>
            <person name="Thomas D.W."/>
            <person name="Wall M."/>
            <person name="Wallis J.M."/>
            <person name="West A.P."/>
            <person name="Whitehead S.L."/>
            <person name="Willey D.L."/>
            <person name="Williams S.A."/>
            <person name="Wilming L."/>
            <person name="Wray P.W."/>
            <person name="Young L."/>
            <person name="Ashurst J.L."/>
            <person name="Coulson A."/>
            <person name="Blocker H."/>
            <person name="Durbin R.M."/>
            <person name="Sulston J.E."/>
            <person name="Hubbard T."/>
            <person name="Jackson M.J."/>
            <person name="Bentley D.R."/>
            <person name="Beck S."/>
            <person name="Rogers J."/>
            <person name="Dunham I."/>
        </authorList>
    </citation>
    <scope>NUCLEOTIDE SEQUENCE [LARGE SCALE GENOMIC DNA]</scope>
</reference>
<reference key="3">
    <citation type="journal article" date="2004" name="Genome Res.">
        <title>The status, quality, and expansion of the NIH full-length cDNA project: the Mammalian Gene Collection (MGC).</title>
        <authorList>
            <consortium name="The MGC Project Team"/>
        </authorList>
    </citation>
    <scope>NUCLEOTIDE SEQUENCE [LARGE SCALE MRNA] (ISOFORMS 1 AND 2)</scope>
</reference>
<reference key="4">
    <citation type="journal article" date="2003" name="Biochemistry">
        <title>Topology of the retinal cone NCKX2 Na/Ca-K exchanger.</title>
        <authorList>
            <person name="Kinjo T.G."/>
            <person name="Szerencsei R.T."/>
            <person name="Winkfein R.J."/>
            <person name="Kang K."/>
            <person name="Schnetkamp P.P."/>
        </authorList>
    </citation>
    <scope>TOPOLOGY</scope>
    <scope>MUTAGENESIS OF ASN-111</scope>
    <scope>GLYCOSYLATION AT ASN-111</scope>
</reference>
<reference key="5">
    <citation type="journal article" date="2016" name="Cell Calcium">
        <title>Cation dependencies and turnover rates of the human K(+)-dependent Na(+)-Ca(2+) exchangers NCKX1, NCKX2, NCKX3 and NCKX4.</title>
        <authorList>
            <person name="Jalloul A.H."/>
            <person name="Szerencsei R.T."/>
            <person name="Schnetkamp P.P."/>
        </authorList>
    </citation>
    <scope>FUNCTION</scope>
    <scope>TRANSPORTER ACTIVITY</scope>
    <scope>SUBCELLULAR LOCATION</scope>
</reference>
<feature type="chain" id="PRO_0000019367" description="Sodium/potassium/calcium exchanger 2">
    <location>
        <begin position="1"/>
        <end position="661"/>
    </location>
</feature>
<feature type="topological domain" description="Cytoplasmic" evidence="3">
    <location>
        <begin position="1"/>
        <end position="38"/>
    </location>
</feature>
<feature type="transmembrane region" description="Helical" evidence="3">
    <location>
        <begin position="39"/>
        <end position="59"/>
    </location>
</feature>
<feature type="topological domain" description="Extracellular" evidence="3">
    <location>
        <begin position="60"/>
        <end position="132"/>
    </location>
</feature>
<feature type="transmembrane region" description="Helical" evidence="3">
    <location>
        <begin position="133"/>
        <end position="153"/>
    </location>
</feature>
<feature type="topological domain" description="Cytoplasmic" evidence="3">
    <location>
        <begin position="154"/>
        <end position="178"/>
    </location>
</feature>
<feature type="transmembrane region" description="Helical" evidence="3">
    <location>
        <begin position="179"/>
        <end position="199"/>
    </location>
</feature>
<feature type="topological domain" description="Extracellular" evidence="3">
    <location>
        <begin position="200"/>
        <end position="204"/>
    </location>
</feature>
<feature type="transmembrane region" description="Helical" evidence="3">
    <location>
        <begin position="205"/>
        <end position="225"/>
    </location>
</feature>
<feature type="topological domain" description="Cytoplasmic" evidence="3">
    <location>
        <begin position="226"/>
        <end position="243"/>
    </location>
</feature>
<feature type="transmembrane region" description="Helical" evidence="3">
    <location>
        <begin position="244"/>
        <end position="264"/>
    </location>
</feature>
<feature type="topological domain" description="Extracellular" evidence="3">
    <location>
        <position position="265"/>
    </location>
</feature>
<feature type="transmembrane region" description="Helical" evidence="3">
    <location>
        <begin position="266"/>
        <end position="286"/>
    </location>
</feature>
<feature type="topological domain" description="Cytoplasmic" evidence="3">
    <location>
        <begin position="287"/>
        <end position="497"/>
    </location>
</feature>
<feature type="transmembrane region" description="Helical" evidence="3">
    <location>
        <begin position="498"/>
        <end position="518"/>
    </location>
</feature>
<feature type="topological domain" description="Extracellular" evidence="3">
    <location>
        <begin position="519"/>
        <end position="533"/>
    </location>
</feature>
<feature type="transmembrane region" description="Helical" evidence="3">
    <location>
        <begin position="534"/>
        <end position="554"/>
    </location>
</feature>
<feature type="topological domain" description="Cytoplasmic" evidence="3">
    <location>
        <begin position="555"/>
        <end position="569"/>
    </location>
</feature>
<feature type="transmembrane region" description="Helical" evidence="3">
    <location>
        <begin position="570"/>
        <end position="590"/>
    </location>
</feature>
<feature type="topological domain" description="Extracellular" evidence="3">
    <location>
        <begin position="591"/>
        <end position="602"/>
    </location>
</feature>
<feature type="transmembrane region" description="Helical" evidence="3">
    <location>
        <begin position="603"/>
        <end position="623"/>
    </location>
</feature>
<feature type="topological domain" description="Cytoplasmic" evidence="3">
    <location>
        <begin position="624"/>
        <end position="630"/>
    </location>
</feature>
<feature type="transmembrane region" description="Helical" evidence="3">
    <location>
        <begin position="631"/>
        <end position="651"/>
    </location>
</feature>
<feature type="topological domain" description="Extracellular" evidence="3">
    <location>
        <begin position="652"/>
        <end position="661"/>
    </location>
</feature>
<feature type="repeat" description="Alpha-1">
    <location>
        <begin position="174"/>
        <end position="214"/>
    </location>
</feature>
<feature type="repeat" description="Alpha-2">
    <location>
        <begin position="541"/>
        <end position="572"/>
    </location>
</feature>
<feature type="region of interest" description="Disordered" evidence="4">
    <location>
        <begin position="99"/>
        <end position="120"/>
    </location>
</feature>
<feature type="region of interest" description="Disordered" evidence="4">
    <location>
        <begin position="306"/>
        <end position="336"/>
    </location>
</feature>
<feature type="region of interest" description="Disordered" evidence="4">
    <location>
        <begin position="397"/>
        <end position="439"/>
    </location>
</feature>
<feature type="compositionally biased region" description="Basic and acidic residues" evidence="4">
    <location>
        <begin position="105"/>
        <end position="120"/>
    </location>
</feature>
<feature type="compositionally biased region" description="Polar residues" evidence="4">
    <location>
        <begin position="415"/>
        <end position="439"/>
    </location>
</feature>
<feature type="modified residue" description="Phosphoserine" evidence="1">
    <location>
        <position position="336"/>
    </location>
</feature>
<feature type="modified residue" description="Phosphoserine" evidence="1">
    <location>
        <position position="340"/>
    </location>
</feature>
<feature type="glycosylation site" description="N-linked (GlcNAc...) asparagine" evidence="6">
    <location>
        <position position="111"/>
    </location>
</feature>
<feature type="splice variant" id="VSP_006164" description="In isoform 2." evidence="8 9">
    <location>
        <begin position="360"/>
        <end position="376"/>
    </location>
</feature>
<feature type="mutagenesis site" description="Loss of N-glycosylation." evidence="6">
    <original>N</original>
    <variation>D</variation>
    <location>
        <position position="111"/>
    </location>
</feature>